<sequence>MAEITAALVKELRERTGAGMMECKKALVEANGDIELAIDNMRKSGQAKAAKKAGRIAAEGVIRVRIGSGFGVLVELNCETDFVAKDTGFLGLADEVADYALANKGTTIDTLATHFEDKRAALVAKIGENMTIRRVQYLEGDVIAQYLHGAKIGVLVAGSGSEEELRKVAMHVAASKPEFVNPEDVSAEVVEHERQIQIDIAINSGKPKEIAEKMVEGRMKKFTGEVSLTGQAFVMDPSVSVGDYLKSVNTSVTNFIRLEVGEGIEKVEEDFAAEVAKITGNNA</sequence>
<evidence type="ECO:0000255" key="1">
    <source>
        <dbReference type="HAMAP-Rule" id="MF_00050"/>
    </source>
</evidence>
<feature type="chain" id="PRO_1000006104" description="Elongation factor Ts">
    <location>
        <begin position="1"/>
        <end position="283"/>
    </location>
</feature>
<feature type="region of interest" description="Involved in Mg(2+) ion dislocation from EF-Tu" evidence="1">
    <location>
        <begin position="80"/>
        <end position="83"/>
    </location>
</feature>
<comment type="function">
    <text evidence="1">Associates with the EF-Tu.GDP complex and induces the exchange of GDP to GTP. It remains bound to the aminoacyl-tRNA.EF-Tu.GTP complex up to the GTP hydrolysis stage on the ribosome.</text>
</comment>
<comment type="subcellular location">
    <subcellularLocation>
        <location evidence="1">Cytoplasm</location>
    </subcellularLocation>
</comment>
<comment type="similarity">
    <text evidence="1">Belongs to the EF-Ts family.</text>
</comment>
<dbReference type="EMBL" id="CP000436">
    <property type="protein sequence ID" value="ABI25364.1"/>
    <property type="molecule type" value="Genomic_DNA"/>
</dbReference>
<dbReference type="SMR" id="Q0I457"/>
<dbReference type="KEGG" id="hso:HS_1089"/>
<dbReference type="eggNOG" id="COG0264">
    <property type="taxonomic scope" value="Bacteria"/>
</dbReference>
<dbReference type="HOGENOM" id="CLU_047155_0_2_6"/>
<dbReference type="GO" id="GO:0005737">
    <property type="term" value="C:cytoplasm"/>
    <property type="evidence" value="ECO:0007669"/>
    <property type="project" value="UniProtKB-SubCell"/>
</dbReference>
<dbReference type="GO" id="GO:0003746">
    <property type="term" value="F:translation elongation factor activity"/>
    <property type="evidence" value="ECO:0007669"/>
    <property type="project" value="UniProtKB-UniRule"/>
</dbReference>
<dbReference type="CDD" id="cd14275">
    <property type="entry name" value="UBA_EF-Ts"/>
    <property type="match status" value="1"/>
</dbReference>
<dbReference type="FunFam" id="1.10.286.20:FF:000001">
    <property type="entry name" value="Elongation factor Ts"/>
    <property type="match status" value="1"/>
</dbReference>
<dbReference type="FunFam" id="1.10.8.10:FF:000001">
    <property type="entry name" value="Elongation factor Ts"/>
    <property type="match status" value="1"/>
</dbReference>
<dbReference type="FunFam" id="3.30.479.20:FF:000001">
    <property type="entry name" value="Elongation factor Ts"/>
    <property type="match status" value="1"/>
</dbReference>
<dbReference type="Gene3D" id="1.10.286.20">
    <property type="match status" value="1"/>
</dbReference>
<dbReference type="Gene3D" id="1.10.8.10">
    <property type="entry name" value="DNA helicase RuvA subunit, C-terminal domain"/>
    <property type="match status" value="1"/>
</dbReference>
<dbReference type="Gene3D" id="3.30.479.20">
    <property type="entry name" value="Elongation factor Ts, dimerisation domain"/>
    <property type="match status" value="2"/>
</dbReference>
<dbReference type="HAMAP" id="MF_00050">
    <property type="entry name" value="EF_Ts"/>
    <property type="match status" value="1"/>
</dbReference>
<dbReference type="InterPro" id="IPR036402">
    <property type="entry name" value="EF-Ts_dimer_sf"/>
</dbReference>
<dbReference type="InterPro" id="IPR001816">
    <property type="entry name" value="Transl_elong_EFTs/EF1B"/>
</dbReference>
<dbReference type="InterPro" id="IPR014039">
    <property type="entry name" value="Transl_elong_EFTs/EF1B_dimer"/>
</dbReference>
<dbReference type="InterPro" id="IPR018101">
    <property type="entry name" value="Transl_elong_Ts_CS"/>
</dbReference>
<dbReference type="InterPro" id="IPR009060">
    <property type="entry name" value="UBA-like_sf"/>
</dbReference>
<dbReference type="NCBIfam" id="TIGR00116">
    <property type="entry name" value="tsf"/>
    <property type="match status" value="1"/>
</dbReference>
<dbReference type="PANTHER" id="PTHR11741">
    <property type="entry name" value="ELONGATION FACTOR TS"/>
    <property type="match status" value="1"/>
</dbReference>
<dbReference type="PANTHER" id="PTHR11741:SF0">
    <property type="entry name" value="ELONGATION FACTOR TS, MITOCHONDRIAL"/>
    <property type="match status" value="1"/>
</dbReference>
<dbReference type="Pfam" id="PF00889">
    <property type="entry name" value="EF_TS"/>
    <property type="match status" value="1"/>
</dbReference>
<dbReference type="SUPFAM" id="SSF54713">
    <property type="entry name" value="Elongation factor Ts (EF-Ts), dimerisation domain"/>
    <property type="match status" value="2"/>
</dbReference>
<dbReference type="SUPFAM" id="SSF46934">
    <property type="entry name" value="UBA-like"/>
    <property type="match status" value="1"/>
</dbReference>
<dbReference type="PROSITE" id="PS01126">
    <property type="entry name" value="EF_TS_1"/>
    <property type="match status" value="1"/>
</dbReference>
<dbReference type="PROSITE" id="PS01127">
    <property type="entry name" value="EF_TS_2"/>
    <property type="match status" value="1"/>
</dbReference>
<name>EFTS_HISS1</name>
<gene>
    <name evidence="1" type="primary">tsf</name>
    <name type="ordered locus">HS_1089</name>
</gene>
<keyword id="KW-0963">Cytoplasm</keyword>
<keyword id="KW-0251">Elongation factor</keyword>
<keyword id="KW-0648">Protein biosynthesis</keyword>
<accession>Q0I457</accession>
<protein>
    <recommendedName>
        <fullName evidence="1">Elongation factor Ts</fullName>
        <shortName evidence="1">EF-Ts</shortName>
    </recommendedName>
</protein>
<proteinExistence type="inferred from homology"/>
<organism>
    <name type="scientific">Histophilus somni (strain 129Pt)</name>
    <name type="common">Haemophilus somnus</name>
    <dbReference type="NCBI Taxonomy" id="205914"/>
    <lineage>
        <taxon>Bacteria</taxon>
        <taxon>Pseudomonadati</taxon>
        <taxon>Pseudomonadota</taxon>
        <taxon>Gammaproteobacteria</taxon>
        <taxon>Pasteurellales</taxon>
        <taxon>Pasteurellaceae</taxon>
        <taxon>Histophilus</taxon>
    </lineage>
</organism>
<reference key="1">
    <citation type="journal article" date="2007" name="J. Bacteriol.">
        <title>Complete genome sequence of Haemophilus somnus (Histophilus somni) strain 129Pt and comparison to Haemophilus ducreyi 35000HP and Haemophilus influenzae Rd.</title>
        <authorList>
            <person name="Challacombe J.F."/>
            <person name="Duncan A.J."/>
            <person name="Brettin T.S."/>
            <person name="Bruce D."/>
            <person name="Chertkov O."/>
            <person name="Detter J.C."/>
            <person name="Han C.S."/>
            <person name="Misra M."/>
            <person name="Richardson P."/>
            <person name="Tapia R."/>
            <person name="Thayer N."/>
            <person name="Xie G."/>
            <person name="Inzana T.J."/>
        </authorList>
    </citation>
    <scope>NUCLEOTIDE SEQUENCE [LARGE SCALE GENOMIC DNA]</scope>
    <source>
        <strain>129Pt</strain>
    </source>
</reference>